<dbReference type="EMBL" id="CP000918">
    <property type="protein sequence ID" value="ACO17840.1"/>
    <property type="molecule type" value="Genomic_DNA"/>
</dbReference>
<dbReference type="RefSeq" id="WP_001085675.1">
    <property type="nucleotide sequence ID" value="NC_012468.1"/>
</dbReference>
<dbReference type="SMR" id="C1C5Z9"/>
<dbReference type="GeneID" id="93739231"/>
<dbReference type="KEGG" id="snm:SP70585_0692"/>
<dbReference type="HOGENOM" id="CLU_062853_0_0_9"/>
<dbReference type="Proteomes" id="UP000002211">
    <property type="component" value="Chromosome"/>
</dbReference>
<dbReference type="GO" id="GO:0015934">
    <property type="term" value="C:large ribosomal subunit"/>
    <property type="evidence" value="ECO:0007669"/>
    <property type="project" value="InterPro"/>
</dbReference>
<dbReference type="GO" id="GO:0019843">
    <property type="term" value="F:rRNA binding"/>
    <property type="evidence" value="ECO:0007669"/>
    <property type="project" value="UniProtKB-UniRule"/>
</dbReference>
<dbReference type="GO" id="GO:0003735">
    <property type="term" value="F:structural constituent of ribosome"/>
    <property type="evidence" value="ECO:0007669"/>
    <property type="project" value="InterPro"/>
</dbReference>
<dbReference type="GO" id="GO:0000049">
    <property type="term" value="F:tRNA binding"/>
    <property type="evidence" value="ECO:0007669"/>
    <property type="project" value="UniProtKB-KW"/>
</dbReference>
<dbReference type="GO" id="GO:0006417">
    <property type="term" value="P:regulation of translation"/>
    <property type="evidence" value="ECO:0007669"/>
    <property type="project" value="UniProtKB-KW"/>
</dbReference>
<dbReference type="GO" id="GO:0006412">
    <property type="term" value="P:translation"/>
    <property type="evidence" value="ECO:0007669"/>
    <property type="project" value="UniProtKB-UniRule"/>
</dbReference>
<dbReference type="CDD" id="cd00403">
    <property type="entry name" value="Ribosomal_L1"/>
    <property type="match status" value="1"/>
</dbReference>
<dbReference type="FunFam" id="3.40.50.790:FF:000001">
    <property type="entry name" value="50S ribosomal protein L1"/>
    <property type="match status" value="1"/>
</dbReference>
<dbReference type="Gene3D" id="3.30.190.20">
    <property type="match status" value="1"/>
</dbReference>
<dbReference type="Gene3D" id="3.40.50.790">
    <property type="match status" value="1"/>
</dbReference>
<dbReference type="HAMAP" id="MF_01318_B">
    <property type="entry name" value="Ribosomal_uL1_B"/>
    <property type="match status" value="1"/>
</dbReference>
<dbReference type="InterPro" id="IPR005878">
    <property type="entry name" value="Ribosom_uL1_bac-type"/>
</dbReference>
<dbReference type="InterPro" id="IPR002143">
    <property type="entry name" value="Ribosomal_uL1"/>
</dbReference>
<dbReference type="InterPro" id="IPR023674">
    <property type="entry name" value="Ribosomal_uL1-like"/>
</dbReference>
<dbReference type="InterPro" id="IPR028364">
    <property type="entry name" value="Ribosomal_uL1/biogenesis"/>
</dbReference>
<dbReference type="InterPro" id="IPR016095">
    <property type="entry name" value="Ribosomal_uL1_3-a/b-sand"/>
</dbReference>
<dbReference type="InterPro" id="IPR023673">
    <property type="entry name" value="Ribosomal_uL1_CS"/>
</dbReference>
<dbReference type="NCBIfam" id="TIGR01169">
    <property type="entry name" value="rplA_bact"/>
    <property type="match status" value="1"/>
</dbReference>
<dbReference type="PANTHER" id="PTHR36427">
    <property type="entry name" value="54S RIBOSOMAL PROTEIN L1, MITOCHONDRIAL"/>
    <property type="match status" value="1"/>
</dbReference>
<dbReference type="PANTHER" id="PTHR36427:SF3">
    <property type="entry name" value="LARGE RIBOSOMAL SUBUNIT PROTEIN UL1M"/>
    <property type="match status" value="1"/>
</dbReference>
<dbReference type="Pfam" id="PF00687">
    <property type="entry name" value="Ribosomal_L1"/>
    <property type="match status" value="1"/>
</dbReference>
<dbReference type="PIRSF" id="PIRSF002155">
    <property type="entry name" value="Ribosomal_L1"/>
    <property type="match status" value="1"/>
</dbReference>
<dbReference type="SUPFAM" id="SSF56808">
    <property type="entry name" value="Ribosomal protein L1"/>
    <property type="match status" value="1"/>
</dbReference>
<dbReference type="PROSITE" id="PS01199">
    <property type="entry name" value="RIBOSOMAL_L1"/>
    <property type="match status" value="1"/>
</dbReference>
<proteinExistence type="inferred from homology"/>
<accession>C1C5Z9</accession>
<gene>
    <name evidence="1" type="primary">rplA</name>
    <name type="ordered locus">SP70585_0692</name>
</gene>
<protein>
    <recommendedName>
        <fullName evidence="1">Large ribosomal subunit protein uL1</fullName>
    </recommendedName>
    <alternativeName>
        <fullName evidence="2">50S ribosomal protein L1</fullName>
    </alternativeName>
</protein>
<comment type="function">
    <text evidence="1">Binds directly to 23S rRNA. The L1 stalk is quite mobile in the ribosome, and is involved in E site tRNA release.</text>
</comment>
<comment type="function">
    <text evidence="1">Protein L1 is also a translational repressor protein, it controls the translation of the L11 operon by binding to its mRNA.</text>
</comment>
<comment type="subunit">
    <text evidence="1">Part of the 50S ribosomal subunit.</text>
</comment>
<comment type="similarity">
    <text evidence="1">Belongs to the universal ribosomal protein uL1 family.</text>
</comment>
<name>RL1_STRP7</name>
<evidence type="ECO:0000255" key="1">
    <source>
        <dbReference type="HAMAP-Rule" id="MF_01318"/>
    </source>
</evidence>
<evidence type="ECO:0000305" key="2"/>
<organism>
    <name type="scientific">Streptococcus pneumoniae (strain 70585)</name>
    <dbReference type="NCBI Taxonomy" id="488221"/>
    <lineage>
        <taxon>Bacteria</taxon>
        <taxon>Bacillati</taxon>
        <taxon>Bacillota</taxon>
        <taxon>Bacilli</taxon>
        <taxon>Lactobacillales</taxon>
        <taxon>Streptococcaceae</taxon>
        <taxon>Streptococcus</taxon>
    </lineage>
</organism>
<feature type="chain" id="PRO_1000165701" description="Large ribosomal subunit protein uL1">
    <location>
        <begin position="1"/>
        <end position="229"/>
    </location>
</feature>
<reference key="1">
    <citation type="journal article" date="2010" name="Genome Biol.">
        <title>Structure and dynamics of the pan-genome of Streptococcus pneumoniae and closely related species.</title>
        <authorList>
            <person name="Donati C."/>
            <person name="Hiller N.L."/>
            <person name="Tettelin H."/>
            <person name="Muzzi A."/>
            <person name="Croucher N.J."/>
            <person name="Angiuoli S.V."/>
            <person name="Oggioni M."/>
            <person name="Dunning Hotopp J.C."/>
            <person name="Hu F.Z."/>
            <person name="Riley D.R."/>
            <person name="Covacci A."/>
            <person name="Mitchell T.J."/>
            <person name="Bentley S.D."/>
            <person name="Kilian M."/>
            <person name="Ehrlich G.D."/>
            <person name="Rappuoli R."/>
            <person name="Moxon E.R."/>
            <person name="Masignani V."/>
        </authorList>
    </citation>
    <scope>NUCLEOTIDE SEQUENCE [LARGE SCALE GENOMIC DNA]</scope>
    <source>
        <strain>70585</strain>
    </source>
</reference>
<keyword id="KW-0678">Repressor</keyword>
<keyword id="KW-0687">Ribonucleoprotein</keyword>
<keyword id="KW-0689">Ribosomal protein</keyword>
<keyword id="KW-0694">RNA-binding</keyword>
<keyword id="KW-0699">rRNA-binding</keyword>
<keyword id="KW-0810">Translation regulation</keyword>
<keyword id="KW-0820">tRNA-binding</keyword>
<sequence length="229" mass="24495">MAKKSKQLRAALEKIDSTKAYSVEEAVALAKETNFAKFDATVEVAYNLNIDVKKADQQIRGAMVLPNGTGKTSRVLVFARGAKAEEAKAAGADFVGEDDLVAKINDGWLDFDVVIATPDMMALVGRLGRVLGPRNLMPNPKTGTVTMDVAKAVEESKGGKITYRADRAGNVQAIIGKVSFEAEKLVENFKAFNETIQKAKPATAKGTYVTNLTITTTQGVGIKVDVNSL</sequence>